<gene>
    <name evidence="8" type="primary">dap4</name>
</gene>
<keyword id="KW-0002">3D-structure</keyword>
<keyword id="KW-0024">Alternative initiation</keyword>
<keyword id="KW-0031">Aminopeptidase</keyword>
<keyword id="KW-0963">Cytoplasm</keyword>
<keyword id="KW-0903">Direct protein sequencing</keyword>
<keyword id="KW-0378">Hydrolase</keyword>
<keyword id="KW-0574">Periplasm</keyword>
<keyword id="KW-0645">Protease</keyword>
<keyword id="KW-0732">Signal</keyword>
<dbReference type="EC" id="3.4.14.5" evidence="3 4"/>
<dbReference type="EMBL" id="AB183425">
    <property type="protein sequence ID" value="BAD27580.1"/>
    <property type="molecule type" value="Genomic_DNA"/>
</dbReference>
<dbReference type="PDB" id="5YP1">
    <property type="method" value="X-ray"/>
    <property type="resolution" value="2.47 A"/>
    <property type="chains" value="A/B/C/D=1-745"/>
</dbReference>
<dbReference type="PDB" id="5YP2">
    <property type="method" value="X-ray"/>
    <property type="resolution" value="2.13 A"/>
    <property type="chains" value="A/B=1-745"/>
</dbReference>
<dbReference type="PDB" id="5YP3">
    <property type="method" value="X-ray"/>
    <property type="resolution" value="2.44 A"/>
    <property type="chains" value="A/B/C/D=1-745"/>
</dbReference>
<dbReference type="PDB" id="5YP4">
    <property type="method" value="X-ray"/>
    <property type="resolution" value="1.90 A"/>
    <property type="chains" value="A/B/C/D=1-745"/>
</dbReference>
<dbReference type="PDBsum" id="5YP1"/>
<dbReference type="PDBsum" id="5YP2"/>
<dbReference type="PDBsum" id="5YP3"/>
<dbReference type="PDBsum" id="5YP4"/>
<dbReference type="SMR" id="Q6F3I7"/>
<dbReference type="ESTHER" id="9psed-q6f3i7">
    <property type="family name" value="DPP4N_Peptidase_S9"/>
</dbReference>
<dbReference type="MEROPS" id="S09.009"/>
<dbReference type="BRENDA" id="3.4.14.5">
    <property type="organism ID" value="27338"/>
</dbReference>
<dbReference type="GO" id="GO:0005737">
    <property type="term" value="C:cytoplasm"/>
    <property type="evidence" value="ECO:0007669"/>
    <property type="project" value="UniProtKB-SubCell"/>
</dbReference>
<dbReference type="GO" id="GO:0042597">
    <property type="term" value="C:periplasmic space"/>
    <property type="evidence" value="ECO:0000314"/>
    <property type="project" value="UniProtKB"/>
</dbReference>
<dbReference type="GO" id="GO:0004177">
    <property type="term" value="F:aminopeptidase activity"/>
    <property type="evidence" value="ECO:0007669"/>
    <property type="project" value="UniProtKB-KW"/>
</dbReference>
<dbReference type="GO" id="GO:0008239">
    <property type="term" value="F:dipeptidyl-peptidase activity"/>
    <property type="evidence" value="ECO:0000314"/>
    <property type="project" value="UniProtKB"/>
</dbReference>
<dbReference type="GO" id="GO:0042802">
    <property type="term" value="F:identical protein binding"/>
    <property type="evidence" value="ECO:0000314"/>
    <property type="project" value="UniProtKB"/>
</dbReference>
<dbReference type="GO" id="GO:0042803">
    <property type="term" value="F:protein homodimerization activity"/>
    <property type="evidence" value="ECO:0000314"/>
    <property type="project" value="UniProtKB"/>
</dbReference>
<dbReference type="GO" id="GO:0008236">
    <property type="term" value="F:serine-type peptidase activity"/>
    <property type="evidence" value="ECO:0007669"/>
    <property type="project" value="InterPro"/>
</dbReference>
<dbReference type="GO" id="GO:0051603">
    <property type="term" value="P:proteolysis involved in protein catabolic process"/>
    <property type="evidence" value="ECO:0000314"/>
    <property type="project" value="UniProtKB"/>
</dbReference>
<dbReference type="FunFam" id="3.40.50.1820:FF:001127">
    <property type="entry name" value="Dipeptidyl aminopeptidase 4"/>
    <property type="match status" value="1"/>
</dbReference>
<dbReference type="Gene3D" id="3.40.50.1820">
    <property type="entry name" value="alpha/beta hydrolase"/>
    <property type="match status" value="1"/>
</dbReference>
<dbReference type="Gene3D" id="2.140.10.30">
    <property type="entry name" value="Dipeptidylpeptidase IV, N-terminal domain"/>
    <property type="match status" value="1"/>
</dbReference>
<dbReference type="InterPro" id="IPR029058">
    <property type="entry name" value="AB_hydrolase_fold"/>
</dbReference>
<dbReference type="InterPro" id="IPR001375">
    <property type="entry name" value="Peptidase_S9_cat"/>
</dbReference>
<dbReference type="InterPro" id="IPR002469">
    <property type="entry name" value="Peptidase_S9B_N"/>
</dbReference>
<dbReference type="InterPro" id="IPR050278">
    <property type="entry name" value="Serine_Prot_S9B/DPPIV"/>
</dbReference>
<dbReference type="PANTHER" id="PTHR11731:SF193">
    <property type="entry name" value="DIPEPTIDYL PEPTIDASE 9"/>
    <property type="match status" value="1"/>
</dbReference>
<dbReference type="PANTHER" id="PTHR11731">
    <property type="entry name" value="PROTEASE FAMILY S9B,C DIPEPTIDYL-PEPTIDASE IV-RELATED"/>
    <property type="match status" value="1"/>
</dbReference>
<dbReference type="Pfam" id="PF00930">
    <property type="entry name" value="DPPIV_N"/>
    <property type="match status" value="1"/>
</dbReference>
<dbReference type="Pfam" id="PF00326">
    <property type="entry name" value="Peptidase_S9"/>
    <property type="match status" value="1"/>
</dbReference>
<dbReference type="SUPFAM" id="SSF53474">
    <property type="entry name" value="alpha/beta-Hydrolases"/>
    <property type="match status" value="1"/>
</dbReference>
<dbReference type="SUPFAM" id="SSF82171">
    <property type="entry name" value="DPP6 N-terminal domain-like"/>
    <property type="match status" value="1"/>
</dbReference>
<sequence length="745" mass="82295">MRLALFALFALMTVATALPAHAEKLTLEAITGSAPLSGPTLTKPQIAPDGSRVTFLRGKDRDRNRLDLWEYDIASGQTRLLVDSSVVLPGEEVLSDEEKARRERQRIAALSGIVDYQWSPDGKALLFPLGGELYFYDLTKSGRDAVRKLTNGGGFATDPKISPKGGFVSFIRDRNLWAIDLASGKEVQLTRDGSDTIGNGVAEFVADEEMDRHTGYWWAPDDAAIAFARIDETPVPVQKRYEVYPDRTEVVEQRYPAAGDHNVRVQLGVIAPKTGARPRWIDLGKDPDIYLARVDWRDPQRLTFQRQSRDQKKIELIETTLTNGTQRTLVTETSTTWVPLHNDLRFLKDGRFLWSSERSGFEHLYVASEDGSTLTALTQGEWVVDSLLAIDEAAGLAYVSGTRDGATEAHVYAVPLSGGEPRRLTQAPGMHAATFARNASVFVDSWSSDTTLPQIELFKADGTKLATLLVNDVSDATHPYAKYRAAHQPTAYGTLTAADGTTPLHYSLIKPAGFDPKKQYPVVVFVYGGPAAQTVTRAWPGRSDSFFNQYLAQQGYVVFTLDNRGTPRRGAAFGGALYGKQGTVEVDDQLRGIEWLKSQAFVDPARIGVYGWSNGGYMTLMLLAKHDEAYACGVAGAPVTDWALYDTHYTERYMDLPKANEAGYREASVFTHVDGIGAGKLLLIHGMADDNVLFTNSTKLMSELQKRGTPFELMTYPGAKHGLRGSDLLHRYRLTEDFFARCLKP</sequence>
<feature type="signal peptide" evidence="3 4">
    <location>
        <begin position="1"/>
        <end position="22"/>
    </location>
</feature>
<feature type="chain" id="PRO_0000433643" description="Dipeptidyl aminopeptidase 4">
    <location>
        <begin position="23"/>
        <end position="745"/>
    </location>
</feature>
<feature type="active site" description="Charge relay system" evidence="1 2">
    <location>
        <position position="613"/>
    </location>
</feature>
<feature type="active site" description="Charge relay system" evidence="1">
    <location>
        <position position="689"/>
    </location>
</feature>
<feature type="active site" description="Charge relay system" evidence="1">
    <location>
        <position position="721"/>
    </location>
</feature>
<feature type="binding site" evidence="1">
    <location>
        <position position="208"/>
    </location>
    <ligand>
        <name>substrate</name>
    </ligand>
</feature>
<feature type="binding site" evidence="1">
    <location>
        <position position="209"/>
    </location>
    <ligand>
        <name>substrate</name>
    </ligand>
</feature>
<feature type="splice variant" id="VSP_057834" description="In isoform 2." evidence="4 5">
    <location>
        <begin position="1"/>
        <end position="11"/>
    </location>
</feature>
<feature type="mutagenesis site" description="Localizes to the cytoplasm." evidence="3">
    <original>M</original>
    <variation>G</variation>
    <location>
        <position position="1"/>
    </location>
</feature>
<feature type="mutagenesis site" description="Localizes to the periplasm." evidence="3">
    <original>M</original>
    <variation>I</variation>
    <location>
        <position position="12"/>
    </location>
</feature>
<feature type="sequence conflict" description="In Ref. 2; no nucleotide entry." evidence="7" ref="2">
    <original>S</original>
    <variation>L</variation>
    <location>
        <position position="37"/>
    </location>
</feature>
<feature type="helix" evidence="11">
    <location>
        <begin position="27"/>
        <end position="31"/>
    </location>
</feature>
<feature type="strand" evidence="11">
    <location>
        <begin position="32"/>
        <end position="34"/>
    </location>
</feature>
<feature type="strand" evidence="11">
    <location>
        <begin position="36"/>
        <end position="38"/>
    </location>
</feature>
<feature type="strand" evidence="11">
    <location>
        <begin position="41"/>
        <end position="46"/>
    </location>
</feature>
<feature type="strand" evidence="11">
    <location>
        <begin position="50"/>
        <end position="58"/>
    </location>
</feature>
<feature type="strand" evidence="11">
    <location>
        <begin position="60"/>
        <end position="62"/>
    </location>
</feature>
<feature type="strand" evidence="11">
    <location>
        <begin position="65"/>
        <end position="72"/>
    </location>
</feature>
<feature type="turn" evidence="11">
    <location>
        <begin position="73"/>
        <end position="76"/>
    </location>
</feature>
<feature type="strand" evidence="11">
    <location>
        <begin position="77"/>
        <end position="82"/>
    </location>
</feature>
<feature type="helix" evidence="11">
    <location>
        <begin position="84"/>
        <end position="87"/>
    </location>
</feature>
<feature type="helix" evidence="11">
    <location>
        <begin position="96"/>
        <end position="104"/>
    </location>
</feature>
<feature type="strand" evidence="11">
    <location>
        <begin position="122"/>
        <end position="129"/>
    </location>
</feature>
<feature type="strand" evidence="11">
    <location>
        <begin position="132"/>
        <end position="139"/>
    </location>
</feature>
<feature type="helix" evidence="10">
    <location>
        <begin position="142"/>
        <end position="145"/>
    </location>
</feature>
<feature type="strand" evidence="11">
    <location>
        <begin position="146"/>
        <end position="148"/>
    </location>
</feature>
<feature type="strand" evidence="11">
    <location>
        <begin position="152"/>
        <end position="154"/>
    </location>
</feature>
<feature type="strand" evidence="11">
    <location>
        <begin position="157"/>
        <end position="161"/>
    </location>
</feature>
<feature type="strand" evidence="11">
    <location>
        <begin position="165"/>
        <end position="172"/>
    </location>
</feature>
<feature type="strand" evidence="11">
    <location>
        <begin position="175"/>
        <end position="180"/>
    </location>
</feature>
<feature type="turn" evidence="11">
    <location>
        <begin position="181"/>
        <end position="184"/>
    </location>
</feature>
<feature type="strand" evidence="11">
    <location>
        <begin position="185"/>
        <end position="188"/>
    </location>
</feature>
<feature type="strand" evidence="11">
    <location>
        <begin position="195"/>
        <end position="200"/>
    </location>
</feature>
<feature type="helix" evidence="11">
    <location>
        <begin position="204"/>
        <end position="209"/>
    </location>
</feature>
<feature type="strand" evidence="11">
    <location>
        <begin position="215"/>
        <end position="218"/>
    </location>
</feature>
<feature type="strand" evidence="11">
    <location>
        <begin position="225"/>
        <end position="231"/>
    </location>
</feature>
<feature type="strand" evidence="11">
    <location>
        <begin position="237"/>
        <end position="244"/>
    </location>
</feature>
<feature type="strand" evidence="11">
    <location>
        <begin position="247"/>
        <end position="254"/>
    </location>
</feature>
<feature type="strand" evidence="11">
    <location>
        <begin position="264"/>
        <end position="270"/>
    </location>
</feature>
<feature type="strand" evidence="11">
    <location>
        <begin position="279"/>
        <end position="281"/>
    </location>
</feature>
<feature type="strand" evidence="11">
    <location>
        <begin position="288"/>
        <end position="298"/>
    </location>
</feature>
<feature type="strand" evidence="11">
    <location>
        <begin position="301"/>
        <end position="308"/>
    </location>
</feature>
<feature type="strand" evidence="11">
    <location>
        <begin position="311"/>
        <end position="320"/>
    </location>
</feature>
<feature type="turn" evidence="11">
    <location>
        <begin position="321"/>
        <end position="323"/>
    </location>
</feature>
<feature type="strand" evidence="11">
    <location>
        <begin position="326"/>
        <end position="333"/>
    </location>
</feature>
<feature type="strand" evidence="11">
    <location>
        <begin position="352"/>
        <end position="356"/>
    </location>
</feature>
<feature type="strand" evidence="11">
    <location>
        <begin position="363"/>
        <end position="367"/>
    </location>
</feature>
<feature type="strand" evidence="9">
    <location>
        <begin position="369"/>
        <end position="372"/>
    </location>
</feature>
<feature type="strand" evidence="11">
    <location>
        <begin position="374"/>
        <end position="378"/>
    </location>
</feature>
<feature type="strand" evidence="11">
    <location>
        <begin position="380"/>
        <end position="382"/>
    </location>
</feature>
<feature type="strand" evidence="11">
    <location>
        <begin position="384"/>
        <end position="391"/>
    </location>
</feature>
<feature type="turn" evidence="11">
    <location>
        <begin position="392"/>
        <end position="395"/>
    </location>
</feature>
<feature type="strand" evidence="11">
    <location>
        <begin position="396"/>
        <end position="401"/>
    </location>
</feature>
<feature type="strand" evidence="11">
    <location>
        <begin position="409"/>
        <end position="415"/>
    </location>
</feature>
<feature type="strand" evidence="11">
    <location>
        <begin position="427"/>
        <end position="435"/>
    </location>
</feature>
<feature type="strand" evidence="11">
    <location>
        <begin position="439"/>
        <end position="447"/>
    </location>
</feature>
<feature type="strand" evidence="11">
    <location>
        <begin position="449"/>
        <end position="451"/>
    </location>
</feature>
<feature type="strand" evidence="11">
    <location>
        <begin position="454"/>
        <end position="459"/>
    </location>
</feature>
<feature type="strand" evidence="11">
    <location>
        <begin position="464"/>
        <end position="469"/>
    </location>
</feature>
<feature type="helix" evidence="11">
    <location>
        <begin position="481"/>
        <end position="484"/>
    </location>
</feature>
<feature type="strand" evidence="11">
    <location>
        <begin position="490"/>
        <end position="496"/>
    </location>
</feature>
<feature type="strand" evidence="11">
    <location>
        <begin position="503"/>
        <end position="509"/>
    </location>
</feature>
<feature type="strand" evidence="11">
    <location>
        <begin position="520"/>
        <end position="525"/>
    </location>
</feature>
<feature type="helix" evidence="11">
    <location>
        <begin position="544"/>
        <end position="553"/>
    </location>
</feature>
<feature type="strand" evidence="11">
    <location>
        <begin position="557"/>
        <end position="561"/>
    </location>
</feature>
<feature type="strand" evidence="11">
    <location>
        <begin position="566"/>
        <end position="569"/>
    </location>
</feature>
<feature type="helix" evidence="11">
    <location>
        <begin position="571"/>
        <end position="574"/>
    </location>
</feature>
<feature type="helix" evidence="11">
    <location>
        <begin position="575"/>
        <end position="577"/>
    </location>
</feature>
<feature type="turn" evidence="11">
    <location>
        <begin position="581"/>
        <end position="583"/>
    </location>
</feature>
<feature type="helix" evidence="11">
    <location>
        <begin position="584"/>
        <end position="597"/>
    </location>
</feature>
<feature type="strand" evidence="11">
    <location>
        <begin position="602"/>
        <end position="612"/>
    </location>
</feature>
<feature type="helix" evidence="11">
    <location>
        <begin position="614"/>
        <end position="625"/>
    </location>
</feature>
<feature type="turn" evidence="11">
    <location>
        <begin position="627"/>
        <end position="629"/>
    </location>
</feature>
<feature type="strand" evidence="11">
    <location>
        <begin position="631"/>
        <end position="637"/>
    </location>
</feature>
<feature type="helix" evidence="11">
    <location>
        <begin position="642"/>
        <end position="644"/>
    </location>
</feature>
<feature type="helix" evidence="11">
    <location>
        <begin position="647"/>
        <end position="654"/>
    </location>
</feature>
<feature type="helix" evidence="11">
    <location>
        <begin position="657"/>
        <end position="659"/>
    </location>
</feature>
<feature type="helix" evidence="11">
    <location>
        <begin position="661"/>
        <end position="667"/>
    </location>
</feature>
<feature type="helix" evidence="11">
    <location>
        <begin position="669"/>
        <end position="672"/>
    </location>
</feature>
<feature type="helix" evidence="11">
    <location>
        <begin position="673"/>
        <end position="675"/>
    </location>
</feature>
<feature type="turn" evidence="11">
    <location>
        <begin position="678"/>
        <end position="680"/>
    </location>
</feature>
<feature type="strand" evidence="11">
    <location>
        <begin position="681"/>
        <end position="686"/>
    </location>
</feature>
<feature type="turn" evidence="11">
    <location>
        <begin position="690"/>
        <end position="694"/>
    </location>
</feature>
<feature type="helix" evidence="11">
    <location>
        <begin position="695"/>
        <end position="707"/>
    </location>
</feature>
<feature type="strand" evidence="11">
    <location>
        <begin position="712"/>
        <end position="716"/>
    </location>
</feature>
<feature type="helix" evidence="11">
    <location>
        <begin position="725"/>
        <end position="743"/>
    </location>
</feature>
<feature type="initiator methionine" description="Removed" evidence="4">
    <location sequence="Q6F3I7-2">
        <position position="1"/>
    </location>
</feature>
<reference evidence="8" key="1">
    <citation type="journal article" date="2005" name="Protein Expr. Purif.">
        <title>Isoforms of dipeptidyl aminopeptidase IV from Pseudomonas sp. WO24: role of the signal sequence and overexpression in Escherichia coli.</title>
        <authorList>
            <person name="Ogasawara W."/>
            <person name="Tanaka C."/>
            <person name="Suzuki M."/>
            <person name="Kobayashi G."/>
            <person name="Ogawa Y."/>
            <person name="Okada H."/>
            <person name="Morikawa Y."/>
        </authorList>
    </citation>
    <scope>NUCLEOTIDE SEQUENCE [GENOMIC DNA] (ISOFORM 1)</scope>
    <scope>PROTEIN SEQUENCE OF N-TERMINUS</scope>
    <scope>CATALYTIC ACTIVITY</scope>
    <scope>SUBCELLULAR LOCATION</scope>
    <scope>MUTAGENESIS OF MET-1 AND MET-12</scope>
    <source>
        <strain evidence="8">WO24</strain>
    </source>
</reference>
<reference key="2">
    <citation type="journal article" date="1996" name="Biosci. Biotechnol. Biochem.">
        <title>Dipeptidyl aminopeptidase IV from Pseudomonas sp. WO24.</title>
        <authorList>
            <person name="Ogasawara W."/>
            <person name="Ogawa Y."/>
            <person name="Yano K."/>
            <person name="Okada H."/>
            <person name="Morikawa Y."/>
        </authorList>
    </citation>
    <scope>NUCLEOTIDE SEQUENCE [GENOMIC DNA] OF 1-46 (ISOFORMS 1 AND 2)</scope>
    <scope>PROTEIN SEQUENCE OF N-TERMINUS</scope>
    <scope>FUNCTION</scope>
    <scope>CATALYTIC ACTIVITY</scope>
    <scope>ACTIVITY REGULATION</scope>
    <scope>BIOPHYSICOCHEMICAL PROPERTIES</scope>
    <scope>SUBSTRATE SPECIFICITY</scope>
    <scope>SUBUNIT</scope>
    <scope>SIGNAL</scope>
    <source>
        <strain evidence="6">WO24</strain>
    </source>
</reference>
<organism>
    <name type="scientific">Pseudoxanthomonas mexicana</name>
    <dbReference type="NCBI Taxonomy" id="128785"/>
    <lineage>
        <taxon>Bacteria</taxon>
        <taxon>Pseudomonadati</taxon>
        <taxon>Pseudomonadota</taxon>
        <taxon>Gammaproteobacteria</taxon>
        <taxon>Lysobacterales</taxon>
        <taxon>Lysobacteraceae</taxon>
        <taxon>Pseudoxanthomonas</taxon>
    </lineage>
</organism>
<protein>
    <recommendedName>
        <fullName evidence="8">Dipeptidyl aminopeptidase 4</fullName>
        <ecNumber evidence="3 4">3.4.14.5</ecNumber>
    </recommendedName>
    <alternativeName>
        <fullName evidence="8">Dipeptidyl aminopeptidase IV</fullName>
        <shortName evidence="5 6">DAP IV</shortName>
    </alternativeName>
</protein>
<comment type="function">
    <text evidence="4">Catalyzes the sequential release of Tyr-Pro, Phe-Pro and Gly-Pro from the N-terminus of peptides and proteins. Is able to cleaves bioactive peptide beta-casomorphin.</text>
</comment>
<comment type="catalytic activity">
    <reaction evidence="3 4">
        <text>Release of an N-terminal dipeptide, Xaa-Yaa-|-Zaa-, from a polypeptide, preferentially when Yaa is Pro, provided Zaa is neither Pro nor hydroxyproline.</text>
        <dbReference type="EC" id="3.4.14.5"/>
    </reaction>
</comment>
<comment type="activity regulation">
    <text evidence="4">Completely inhibited by the serine protease inhibitor diisopropyl fluorophosphate (DFP) and moderately by N-tosyl-L-phenyl-alanyl chloromethyl ketone (TPCK). Somewhat inhibited by phenylmethanesulfonyl fluoride (PMSF). Activity is not affected by thiol- or metalloprotease inhibitors, such as iodoacetate (IAA), EDTA, N-tosyl-L-lysyl chloromethyl ketone (TLCK), o-phenanthlorine, N-ethylmaleimide (NEM) or dithiothreitol (DTT).</text>
</comment>
<comment type="biophysicochemical properties">
    <kinetics>
        <KM evidence="4">0.142 mM for Gly-Pro-pNA (at pH 8.0 and 37 degrees Celsius)</KM>
        <Vmax evidence="4">16.7 umol/min/mg enzyme with Gly-Pro-pNA as substrate (at pH 8.0 and 37 degrees Celsius)</Vmax>
    </kinetics>
    <phDependence>
        <text evidence="4">Optimum pH is 8.0 for the hydrolysis of Gly-Pro-pNA. No hydrolysis is detected at a pH below 5.5 or above 11.0.</text>
    </phDependence>
    <temperatureDependence>
        <text evidence="4">Optimum temperature is between 40 and 50 degrees Celsius for the hydrolysis of Gly-Pro-pNA. Stable for at least 30 minutes below 30 degrees Celsius.</text>
    </temperatureDependence>
</comment>
<comment type="subunit">
    <text evidence="4">Homodimer.</text>
</comment>
<comment type="subcellular location">
    <molecule>Isoform 2</molecule>
    <subcellularLocation>
        <location evidence="3">Cytoplasm</location>
    </subcellularLocation>
</comment>
<comment type="subcellular location">
    <molecule>Isoform 1</molecule>
    <subcellularLocation>
        <location evidence="3">Periplasm</location>
    </subcellularLocation>
</comment>
<comment type="alternative products">
    <event type="alternative initiation"/>
    <isoform>
        <id>Q6F3I7-1</id>
        <name>1</name>
        <sequence type="displayed"/>
    </isoform>
    <isoform>
        <id>Q6F3I7-2</id>
        <name>2</name>
        <sequence type="described" ref="VSP_057834"/>
    </isoform>
</comment>
<comment type="similarity">
    <text evidence="7">Belongs to the peptidase S9B family.</text>
</comment>
<name>DAP4_PSEMX</name>
<evidence type="ECO:0000250" key="1">
    <source>
        <dbReference type="UniProtKB" id="Q12884"/>
    </source>
</evidence>
<evidence type="ECO:0000255" key="2">
    <source>
        <dbReference type="PROSITE-ProRule" id="PRU10084"/>
    </source>
</evidence>
<evidence type="ECO:0000269" key="3">
    <source>
    </source>
</evidence>
<evidence type="ECO:0000269" key="4">
    <source>
    </source>
</evidence>
<evidence type="ECO:0000303" key="5">
    <source>
    </source>
</evidence>
<evidence type="ECO:0000303" key="6">
    <source>
    </source>
</evidence>
<evidence type="ECO:0000305" key="7"/>
<evidence type="ECO:0000312" key="8">
    <source>
        <dbReference type="EMBL" id="BAD27580.1"/>
    </source>
</evidence>
<evidence type="ECO:0007829" key="9">
    <source>
        <dbReference type="PDB" id="5YP1"/>
    </source>
</evidence>
<evidence type="ECO:0007829" key="10">
    <source>
        <dbReference type="PDB" id="5YP2"/>
    </source>
</evidence>
<evidence type="ECO:0007829" key="11">
    <source>
        <dbReference type="PDB" id="5YP4"/>
    </source>
</evidence>
<accession>Q6F3I7</accession>
<proteinExistence type="evidence at protein level"/>